<name>NAAA_RAT</name>
<dbReference type="EC" id="3.5.1.60" evidence="4 5"/>
<dbReference type="EC" id="3.5.1.23" evidence="2"/>
<dbReference type="EMBL" id="AB162193">
    <property type="protein sequence ID" value="BAD88529.1"/>
    <property type="molecule type" value="mRNA"/>
</dbReference>
<dbReference type="EMBL" id="BC105771">
    <property type="protein sequence ID" value="AAI05772.1"/>
    <property type="molecule type" value="mRNA"/>
</dbReference>
<dbReference type="RefSeq" id="NP_001010967.1">
    <property type="nucleotide sequence ID" value="NM_001010967.2"/>
</dbReference>
<dbReference type="SMR" id="Q5KTC7"/>
<dbReference type="FunCoup" id="Q5KTC7">
    <property type="interactions" value="581"/>
</dbReference>
<dbReference type="STRING" id="10116.ENSRNOP00000003102"/>
<dbReference type="BindingDB" id="Q5KTC7"/>
<dbReference type="ChEMBL" id="CHEMBL2034805"/>
<dbReference type="GuidetoPHARMACOLOGY" id="1402"/>
<dbReference type="MEROPS" id="C89.002"/>
<dbReference type="GlyCosmos" id="Q5KTC7">
    <property type="glycosylation" value="4 sites, No reported glycans"/>
</dbReference>
<dbReference type="GlyGen" id="Q5KTC7">
    <property type="glycosylation" value="4 sites"/>
</dbReference>
<dbReference type="PhosphoSitePlus" id="Q5KTC7"/>
<dbReference type="PaxDb" id="10116-ENSRNOP00000003102"/>
<dbReference type="Ensembl" id="ENSRNOT00000003102.7">
    <property type="protein sequence ID" value="ENSRNOP00000003102.5"/>
    <property type="gene ID" value="ENSRNOG00000002273.7"/>
</dbReference>
<dbReference type="GeneID" id="497009"/>
<dbReference type="KEGG" id="rno:497009"/>
<dbReference type="UCSC" id="RGD:1307267">
    <property type="organism name" value="rat"/>
</dbReference>
<dbReference type="AGR" id="RGD:1307267"/>
<dbReference type="CTD" id="27163"/>
<dbReference type="RGD" id="1307267">
    <property type="gene designation" value="Naaa"/>
</dbReference>
<dbReference type="eggNOG" id="ENOG502QT7H">
    <property type="taxonomic scope" value="Eukaryota"/>
</dbReference>
<dbReference type="GeneTree" id="ENSGT00530000063548"/>
<dbReference type="HOGENOM" id="CLU_054401_0_0_1"/>
<dbReference type="InParanoid" id="Q5KTC7"/>
<dbReference type="OMA" id="GQDHINM"/>
<dbReference type="OrthoDB" id="5273684at2759"/>
<dbReference type="PhylomeDB" id="Q5KTC7"/>
<dbReference type="TreeFam" id="TF313219"/>
<dbReference type="BRENDA" id="3.5.1.4">
    <property type="organism ID" value="5301"/>
</dbReference>
<dbReference type="BRENDA" id="3.5.1.60">
    <property type="organism ID" value="5301"/>
</dbReference>
<dbReference type="Reactome" id="R-RNO-112310">
    <property type="pathway name" value="Neurotransmitter release cycle"/>
</dbReference>
<dbReference type="UniPathway" id="UPA00199"/>
<dbReference type="PRO" id="PR:Q5KTC7"/>
<dbReference type="Proteomes" id="UP000002494">
    <property type="component" value="Chromosome 14"/>
</dbReference>
<dbReference type="Bgee" id="ENSRNOG00000002273">
    <property type="expression patterns" value="Expressed in lung and 20 other cell types or tissues"/>
</dbReference>
<dbReference type="GO" id="GO:0005737">
    <property type="term" value="C:cytoplasm"/>
    <property type="evidence" value="ECO:0000266"/>
    <property type="project" value="RGD"/>
</dbReference>
<dbReference type="GO" id="GO:0005764">
    <property type="term" value="C:lysosome"/>
    <property type="evidence" value="ECO:0000250"/>
    <property type="project" value="UniProtKB"/>
</dbReference>
<dbReference type="GO" id="GO:0016020">
    <property type="term" value="C:membrane"/>
    <property type="evidence" value="ECO:0000250"/>
    <property type="project" value="UniProtKB"/>
</dbReference>
<dbReference type="GO" id="GO:0140297">
    <property type="term" value="F:DNA-binding transcription factor binding"/>
    <property type="evidence" value="ECO:0000266"/>
    <property type="project" value="RGD"/>
</dbReference>
<dbReference type="GO" id="GO:0017064">
    <property type="term" value="F:fatty acid amide hydrolase activity"/>
    <property type="evidence" value="ECO:0000250"/>
    <property type="project" value="UniProtKB"/>
</dbReference>
<dbReference type="GO" id="GO:0016810">
    <property type="term" value="F:hydrolase activity, acting on carbon-nitrogen (but not peptide) bonds"/>
    <property type="evidence" value="ECO:0000266"/>
    <property type="project" value="RGD"/>
</dbReference>
<dbReference type="GO" id="GO:0047412">
    <property type="term" value="F:N-(long-chain-acyl)ethanolamine deacylase activity"/>
    <property type="evidence" value="ECO:0000314"/>
    <property type="project" value="UniProtKB"/>
</dbReference>
<dbReference type="GO" id="GO:0017040">
    <property type="term" value="F:N-acylsphingosine amidohydrolase activity"/>
    <property type="evidence" value="ECO:0000250"/>
    <property type="project" value="UniProtKB"/>
</dbReference>
<dbReference type="GO" id="GO:0006631">
    <property type="term" value="P:fatty acid metabolic process"/>
    <property type="evidence" value="ECO:0000250"/>
    <property type="project" value="UniProtKB"/>
</dbReference>
<dbReference type="GO" id="GO:0016042">
    <property type="term" value="P:lipid catabolic process"/>
    <property type="evidence" value="ECO:0007669"/>
    <property type="project" value="UniProtKB-KW"/>
</dbReference>
<dbReference type="GO" id="GO:0070291">
    <property type="term" value="P:N-acylethanolamine metabolic process"/>
    <property type="evidence" value="ECO:0000314"/>
    <property type="project" value="UniProtKB"/>
</dbReference>
<dbReference type="GO" id="GO:0070292">
    <property type="term" value="P:N-acylphosphatidylethanolamine metabolic process"/>
    <property type="evidence" value="ECO:0000250"/>
    <property type="project" value="UniProtKB"/>
</dbReference>
<dbReference type="GO" id="GO:0006670">
    <property type="term" value="P:sphingosine metabolic process"/>
    <property type="evidence" value="ECO:0000250"/>
    <property type="project" value="UniProtKB"/>
</dbReference>
<dbReference type="CDD" id="cd01903">
    <property type="entry name" value="Ntn_AC_NAAA"/>
    <property type="match status" value="1"/>
</dbReference>
<dbReference type="FunFam" id="3.60.60.10:FF:000003">
    <property type="entry name" value="N-acylethanolamine-hydrolyzing acid amidase"/>
    <property type="match status" value="1"/>
</dbReference>
<dbReference type="Gene3D" id="3.60.60.10">
    <property type="entry name" value="Penicillin V Acylase, Chain A"/>
    <property type="match status" value="1"/>
</dbReference>
<dbReference type="InterPro" id="IPR016699">
    <property type="entry name" value="Acid_ceramidase-like"/>
</dbReference>
<dbReference type="InterPro" id="IPR029130">
    <property type="entry name" value="Acid_ceramidase_N"/>
</dbReference>
<dbReference type="PANTHER" id="PTHR28583">
    <property type="entry name" value="ACID AMIDASE"/>
    <property type="match status" value="1"/>
</dbReference>
<dbReference type="PANTHER" id="PTHR28583:SF4">
    <property type="entry name" value="N-ACYLETHANOLAMINE-HYDROLYZING ACID AMIDASE"/>
    <property type="match status" value="1"/>
</dbReference>
<dbReference type="Pfam" id="PF15508">
    <property type="entry name" value="NAAA-beta"/>
    <property type="match status" value="1"/>
</dbReference>
<dbReference type="PIRSF" id="PIRSF017632">
    <property type="entry name" value="Acid_ceramidase-like"/>
    <property type="match status" value="1"/>
</dbReference>
<evidence type="ECO:0000250" key="1"/>
<evidence type="ECO:0000250" key="2">
    <source>
        <dbReference type="UniProtKB" id="Q02083"/>
    </source>
</evidence>
<evidence type="ECO:0000255" key="3"/>
<evidence type="ECO:0000269" key="4">
    <source>
    </source>
</evidence>
<evidence type="ECO:0000269" key="5">
    <source>
    </source>
</evidence>
<evidence type="ECO:0000269" key="6">
    <source>
    </source>
</evidence>
<evidence type="ECO:0000305" key="7"/>
<evidence type="ECO:0000305" key="8">
    <source>
    </source>
</evidence>
<evidence type="ECO:0000312" key="9">
    <source>
        <dbReference type="RGD" id="1307267"/>
    </source>
</evidence>
<feature type="signal peptide" evidence="1">
    <location>
        <begin position="1"/>
        <end position="33"/>
    </location>
</feature>
<feature type="chain" id="PRO_0000002320" description="N-acylethanolamine-hydrolyzing acid amidase">
    <location>
        <begin position="34"/>
        <end position="362"/>
    </location>
</feature>
<feature type="chain" id="PRO_0000419654" description="N-acylethanolamine-hydrolyzing acid amidase subunit alpha">
    <location>
        <begin position="34"/>
        <end position="130"/>
    </location>
</feature>
<feature type="chain" id="PRO_0000419655" description="N-acylethanolamine-hydrolyzing acid amidase subunit beta">
    <location>
        <begin position="131"/>
        <end position="362"/>
    </location>
</feature>
<feature type="active site" description="Nucleophile" evidence="2">
    <location>
        <position position="131"/>
    </location>
</feature>
<feature type="site" description="Important for enzyme activity" evidence="2">
    <location>
        <position position="147"/>
    </location>
</feature>
<feature type="site" description="Important for enzyme activity" evidence="2">
    <location>
        <position position="292"/>
    </location>
</feature>
<feature type="glycosylation site" description="N-linked (GlcNAc...) asparagine" evidence="3">
    <location>
        <position position="42"/>
    </location>
</feature>
<feature type="glycosylation site" description="N-linked (GlcNAc...) asparagine" evidence="3">
    <location>
        <position position="112"/>
    </location>
</feature>
<feature type="glycosylation site" description="N-linked (GlcNAc...) asparagine" evidence="3">
    <location>
        <position position="314"/>
    </location>
</feature>
<feature type="glycosylation site" description="N-linked (GlcNAc...) asparagine" evidence="3">
    <location>
        <position position="338"/>
    </location>
</feature>
<organism>
    <name type="scientific">Rattus norvegicus</name>
    <name type="common">Rat</name>
    <dbReference type="NCBI Taxonomy" id="10116"/>
    <lineage>
        <taxon>Eukaryota</taxon>
        <taxon>Metazoa</taxon>
        <taxon>Chordata</taxon>
        <taxon>Craniata</taxon>
        <taxon>Vertebrata</taxon>
        <taxon>Euteleostomi</taxon>
        <taxon>Mammalia</taxon>
        <taxon>Eutheria</taxon>
        <taxon>Euarchontoglires</taxon>
        <taxon>Glires</taxon>
        <taxon>Rodentia</taxon>
        <taxon>Myomorpha</taxon>
        <taxon>Muroidea</taxon>
        <taxon>Muridae</taxon>
        <taxon>Murinae</taxon>
        <taxon>Rattus</taxon>
    </lineage>
</organism>
<gene>
    <name evidence="9" type="primary">Naaa</name>
    <name type="synonym">Asahl</name>
</gene>
<accession>Q5KTC7</accession>
<accession>Q3KRD3</accession>
<protein>
    <recommendedName>
        <fullName evidence="7">N-acylethanolamine-hydrolyzing acid amidase</fullName>
        <ecNumber evidence="4 5">3.5.1.60</ecNumber>
    </recommendedName>
    <alternativeName>
        <fullName evidence="2">Acylsphingosine deacylase NAAA</fullName>
        <ecNumber evidence="2">3.5.1.23</ecNumber>
    </alternativeName>
    <alternativeName>
        <fullName>N-acylsphingosine amidohydrolase-like</fullName>
        <shortName>ASAH-like protein</shortName>
    </alternativeName>
    <component>
        <recommendedName>
            <fullName>N-acylethanolamine-hydrolyzing acid amidase subunit alpha</fullName>
        </recommendedName>
    </component>
    <component>
        <recommendedName>
            <fullName>N-acylethanolamine-hydrolyzing acid amidase subunit beta</fullName>
        </recommendedName>
    </component>
</protein>
<proteinExistence type="evidence at protein level"/>
<comment type="function">
    <text evidence="4 5 6">Degrades bioactive fatty acid amides to their corresponding acids, with the following preference: N-palmitoylethanolamine &gt; N-myristoylethanolamine &gt; N-stearoylethanolamine &gt; N-oleoylethanolamine &gt; N-linoleoylethanolamine &gt; N-arachidonoylethanolamine.</text>
</comment>
<comment type="catalytic activity">
    <reaction evidence="4 5 6">
        <text>N-hexadecanoylethanolamine + H2O = ethanolamine + hexadecanoate</text>
        <dbReference type="Rhea" id="RHEA:45064"/>
        <dbReference type="ChEBI" id="CHEBI:7896"/>
        <dbReference type="ChEBI" id="CHEBI:15377"/>
        <dbReference type="ChEBI" id="CHEBI:57603"/>
        <dbReference type="ChEBI" id="CHEBI:71464"/>
    </reaction>
    <physiologicalReaction direction="left-to-right" evidence="4 5 8">
        <dbReference type="Rhea" id="RHEA:45065"/>
    </physiologicalReaction>
</comment>
<comment type="catalytic activity">
    <reaction evidence="4 5 6 8">
        <text>an N-(long-chain fatty acyl)ethanolamine + H2O = a long-chain fatty acid + ethanolamine</text>
        <dbReference type="Rhea" id="RHEA:17505"/>
        <dbReference type="ChEBI" id="CHEBI:15377"/>
        <dbReference type="ChEBI" id="CHEBI:15897"/>
        <dbReference type="ChEBI" id="CHEBI:57560"/>
        <dbReference type="ChEBI" id="CHEBI:57603"/>
        <dbReference type="EC" id="3.5.1.60"/>
    </reaction>
    <physiologicalReaction direction="left-to-right" evidence="4 5">
        <dbReference type="Rhea" id="RHEA:17506"/>
    </physiologicalReaction>
</comment>
<comment type="catalytic activity">
    <reaction evidence="2">
        <text>N-dodecanoylethanolamine + H2O = dodecanoate + ethanolamine</text>
        <dbReference type="Rhea" id="RHEA:45456"/>
        <dbReference type="ChEBI" id="CHEBI:15377"/>
        <dbReference type="ChEBI" id="CHEBI:18262"/>
        <dbReference type="ChEBI" id="CHEBI:57603"/>
        <dbReference type="ChEBI" id="CHEBI:85263"/>
    </reaction>
    <physiologicalReaction direction="left-to-right" evidence="2">
        <dbReference type="Rhea" id="RHEA:45457"/>
    </physiologicalReaction>
</comment>
<comment type="catalytic activity">
    <reaction evidence="2">
        <text>N-tetradecanoylethanolamine + H2O = tetradecanoate + ethanolamine</text>
        <dbReference type="Rhea" id="RHEA:45452"/>
        <dbReference type="ChEBI" id="CHEBI:15377"/>
        <dbReference type="ChEBI" id="CHEBI:30807"/>
        <dbReference type="ChEBI" id="CHEBI:57603"/>
        <dbReference type="ChEBI" id="CHEBI:85262"/>
    </reaction>
    <physiologicalReaction direction="left-to-right" evidence="2">
        <dbReference type="Rhea" id="RHEA:45453"/>
    </physiologicalReaction>
</comment>
<comment type="catalytic activity">
    <reaction evidence="2">
        <text>an N-acylsphing-4-enine + H2O = sphing-4-enine + a fatty acid</text>
        <dbReference type="Rhea" id="RHEA:20856"/>
        <dbReference type="ChEBI" id="CHEBI:15377"/>
        <dbReference type="ChEBI" id="CHEBI:28868"/>
        <dbReference type="ChEBI" id="CHEBI:52639"/>
        <dbReference type="ChEBI" id="CHEBI:57756"/>
        <dbReference type="EC" id="3.5.1.23"/>
    </reaction>
    <physiologicalReaction direction="left-to-right" evidence="2">
        <dbReference type="Rhea" id="RHEA:20857"/>
    </physiologicalReaction>
</comment>
<comment type="catalytic activity">
    <reaction evidence="2">
        <text>N-hexadecanoylsphing-4-enine + H2O = sphing-4-enine + hexadecanoate</text>
        <dbReference type="Rhea" id="RHEA:38891"/>
        <dbReference type="ChEBI" id="CHEBI:7896"/>
        <dbReference type="ChEBI" id="CHEBI:15377"/>
        <dbReference type="ChEBI" id="CHEBI:57756"/>
        <dbReference type="ChEBI" id="CHEBI:72959"/>
    </reaction>
    <physiologicalReaction direction="left-to-right" evidence="2">
        <dbReference type="Rhea" id="RHEA:38892"/>
    </physiologicalReaction>
</comment>
<comment type="catalytic activity">
    <reaction evidence="2">
        <text>N-dodecanoylsphing-4-enine + H2O = dodecanoate + sphing-4-enine</text>
        <dbReference type="Rhea" id="RHEA:41291"/>
        <dbReference type="ChEBI" id="CHEBI:15377"/>
        <dbReference type="ChEBI" id="CHEBI:18262"/>
        <dbReference type="ChEBI" id="CHEBI:57756"/>
        <dbReference type="ChEBI" id="CHEBI:72956"/>
    </reaction>
    <physiologicalReaction direction="left-to-right" evidence="2">
        <dbReference type="Rhea" id="RHEA:41292"/>
    </physiologicalReaction>
</comment>
<comment type="activity regulation">
    <text evidence="4 6">Stimulated by DTT (PubMed:11463796, PubMed:22860206). Stimulated by nonionic detergent of the polyoxyethylenep-t-octylphenylether type (Triton X-100 or Nonidet P-40) whereas 3-[(3-cholamidopropyl)dimethylammonio]propane-1-sulfonate (CHAPS) and octyl alpha-D-glucopyranoside decrease the N-(long-chain-acyl)ethanolamine deacylase activity (PubMed:22860206). Polysorbate 20 (Tween 20) is inhibitory (PubMed:11463796). Stimulated by endogenous phospholipids such as choline- or ethanolamine-containing phospholipids, and dihydrolipoic acid (PubMed:22860206).</text>
</comment>
<comment type="biophysicochemical properties">
    <kinetics>
        <KM evidence="4">35 uM for N-palmitoylethanolamine</KM>
    </kinetics>
    <phDependence>
        <text evidence="4">Optimum pH is 5 with N-palmitoylethanolamine as substrate.</text>
    </phDependence>
</comment>
<comment type="pathway">
    <text evidence="4 5">Lipid metabolism; fatty acid metabolism.</text>
</comment>
<comment type="subunit">
    <text evidence="2">Heterodimer of an alpha and a beta subunit, produced by autocatalytic cleavage.</text>
</comment>
<comment type="subcellular location">
    <subcellularLocation>
        <location evidence="2">Lysosome</location>
    </subcellularLocation>
    <subcellularLocation>
        <location evidence="2">Membrane</location>
        <topology evidence="2">Peripheral membrane protein</topology>
    </subcellularLocation>
</comment>
<comment type="tissue specificity">
    <text evidence="5 6">Expressed in brain, cecum, colon, heart, ileum, kidney, liver, lung, spleen, stomach, submaxillary gland, testis and thymus.</text>
</comment>
<comment type="PTM">
    <text evidence="2">N-glycosylated. Tunicamycin treatment causes a reduction in specific activity against N-palmitoylethanolamine.</text>
</comment>
<comment type="PTM">
    <text evidence="2">Autoproteolytic cleavage at pH 4.5 gives rise to the alpha and beta subunit. Cleavage gives rise to a conformation change that activates the enzyme. The same catalytic Cys residue mediates the autoproteolytic cleavage and subsequent hydrolysis of lipid substrates.</text>
</comment>
<comment type="similarity">
    <text evidence="7">Belongs to the acid ceramidase family.</text>
</comment>
<keyword id="KW-0068">Autocatalytic cleavage</keyword>
<keyword id="KW-0903">Direct protein sequencing</keyword>
<keyword id="KW-0276">Fatty acid metabolism</keyword>
<keyword id="KW-0325">Glycoprotein</keyword>
<keyword id="KW-0378">Hydrolase</keyword>
<keyword id="KW-0442">Lipid degradation</keyword>
<keyword id="KW-0443">Lipid metabolism</keyword>
<keyword id="KW-0458">Lysosome</keyword>
<keyword id="KW-0472">Membrane</keyword>
<keyword id="KW-1185">Reference proteome</keyword>
<keyword id="KW-0732">Signal</keyword>
<keyword id="KW-0865">Zymogen</keyword>
<sequence length="362" mass="40313">MGTPAIRAACHGAHLALALLLLLSLSDPWLWATAPGTPPLFNVSLDAAPELRWLPMLQHYDPDFVRAAVAQVIGDRVPQWILEMIGEIVQKVESFLPQPFTSEIRGICDYLNLSLAEGVLVNLAYEASAFCTSIVAQDSQGRIYHGRNLDYPFGNALRKLTADVQFVKNGQIVFTATTFVGYVGLWTGQSPHKFTISGDERDKGWWWENMIAALSLGHSPISWLIRKTLTESEDFEAAVYTLAKTPLIADVYYIVGGTSPQEGVVITRDRGGPADIWPLDPLNGAWFRVETNYDHWEPVPKRDDRRTPAIKALNATGQAHLSLETLFQVLSVFPVYNNYTIYTTVMSAAEPDKYMTMIRNPS</sequence>
<reference key="1">
    <citation type="journal article" date="2005" name="J. Biol. Chem.">
        <title>Molecular characterization of N-acylethanolamine-hydrolyzing acid amidase, a novel member of the choloylglycine hydrolase family with structural and functional similarity to acid ceramidase.</title>
        <authorList>
            <person name="Tsuboi K."/>
            <person name="Sun Y.-X."/>
            <person name="Okamoto Y."/>
            <person name="Araki N."/>
            <person name="Tonai T."/>
            <person name="Ueda N."/>
        </authorList>
    </citation>
    <scope>NUCLEOTIDE SEQUENCE [MRNA]</scope>
    <scope>PROTEIN SEQUENCE OF 131-143</scope>
    <scope>CATALYTIC ACTIVITY</scope>
    <scope>FUNCTION</scope>
    <scope>TISSUE SPECIFICITY</scope>
    <source>
        <strain>Wistar</strain>
        <tissue>Lung</tissue>
    </source>
</reference>
<reference key="2">
    <citation type="journal article" date="2004" name="Genome Res.">
        <title>The status, quality, and expansion of the NIH full-length cDNA project: the Mammalian Gene Collection (MGC).</title>
        <authorList>
            <consortium name="The MGC Project Team"/>
        </authorList>
    </citation>
    <scope>NUCLEOTIDE SEQUENCE [LARGE SCALE MRNA]</scope>
    <source>
        <tissue>Prostate</tissue>
    </source>
</reference>
<reference key="3">
    <citation type="journal article" date="2001" name="J. Biol. Chem.">
        <title>Purification and characterization of an acid amidase selective for N-palmitoylethanolamine, a putative endogenous anti-inflammatory substance.</title>
        <authorList>
            <person name="Ueda N."/>
            <person name="Yamanaka K."/>
            <person name="Yamamoto S."/>
        </authorList>
    </citation>
    <scope>FUNCTION</scope>
    <scope>CATALYTIC ACTIVITY</scope>
    <scope>ACTIVITY REGULATION</scope>
    <scope>BIOPHYSICOCHEMICAL PROPERTIES</scope>
</reference>
<reference key="4">
    <citation type="journal article" date="2012" name="ACS Chem. Neurosci.">
        <title>Endogenous molecules stimulating N-acylethanolamine-hydrolyzing acid amidase (NAAA).</title>
        <authorList>
            <person name="Tai T."/>
            <person name="Tsuboi K."/>
            <person name="Uyama T."/>
            <person name="Masuda K."/>
            <person name="Cravatt B.F."/>
            <person name="Houchi H."/>
            <person name="Ueda N."/>
        </authorList>
    </citation>
    <scope>FUNCTION</scope>
    <scope>ACTIVITY REGULATION</scope>
    <scope>CATALYTIC ACTIVITY</scope>
    <scope>TISSUE SPECIFICITY</scope>
</reference>